<name>RL6_CLOAB</name>
<gene>
    <name evidence="1" type="primary">rplF</name>
    <name type="ordered locus">CA_C3118</name>
</gene>
<sequence length="179" mass="19361">MSRVGKQPVEIPSGVTVTVTPDNVVTVKGTKGQLEKAMHKDMKIAVEDNKVVVTRPSDSKNHKALHGLTRALINNMVIGVTEGFSKTLQLVGVGYKAQLKGKSLILNLGYSHPIEVASIEGVTFEIPDANTVVVKGINKELVGSVAADIRTFRKPEPYKGKGIKYSDEVIRRKEGKTGK</sequence>
<comment type="function">
    <text evidence="1">This protein binds to the 23S rRNA, and is important in its secondary structure. It is located near the subunit interface in the base of the L7/L12 stalk, and near the tRNA binding site of the peptidyltransferase center.</text>
</comment>
<comment type="subunit">
    <text evidence="1">Part of the 50S ribosomal subunit.</text>
</comment>
<comment type="similarity">
    <text evidence="1">Belongs to the universal ribosomal protein uL6 family.</text>
</comment>
<reference key="1">
    <citation type="journal article" date="2001" name="J. Bacteriol.">
        <title>Genome sequence and comparative analysis of the solvent-producing bacterium Clostridium acetobutylicum.</title>
        <authorList>
            <person name="Noelling J."/>
            <person name="Breton G."/>
            <person name="Omelchenko M.V."/>
            <person name="Makarova K.S."/>
            <person name="Zeng Q."/>
            <person name="Gibson R."/>
            <person name="Lee H.M."/>
            <person name="Dubois J."/>
            <person name="Qiu D."/>
            <person name="Hitti J."/>
            <person name="Wolf Y.I."/>
            <person name="Tatusov R.L."/>
            <person name="Sabathe F."/>
            <person name="Doucette-Stamm L.A."/>
            <person name="Soucaille P."/>
            <person name="Daly M.J."/>
            <person name="Bennett G.N."/>
            <person name="Koonin E.V."/>
            <person name="Smith D.R."/>
        </authorList>
    </citation>
    <scope>NUCLEOTIDE SEQUENCE [LARGE SCALE GENOMIC DNA]</scope>
    <source>
        <strain>ATCC 824 / DSM 792 / JCM 1419 / IAM 19013 / LMG 5710 / NBRC 13948 / NRRL B-527 / VKM B-1787 / 2291 / W</strain>
    </source>
</reference>
<protein>
    <recommendedName>
        <fullName evidence="1">Large ribosomal subunit protein uL6</fullName>
    </recommendedName>
    <alternativeName>
        <fullName evidence="2">50S ribosomal protein L6</fullName>
    </alternativeName>
</protein>
<organism>
    <name type="scientific">Clostridium acetobutylicum (strain ATCC 824 / DSM 792 / JCM 1419 / IAM 19013 / LMG 5710 / NBRC 13948 / NRRL B-527 / VKM B-1787 / 2291 / W)</name>
    <dbReference type="NCBI Taxonomy" id="272562"/>
    <lineage>
        <taxon>Bacteria</taxon>
        <taxon>Bacillati</taxon>
        <taxon>Bacillota</taxon>
        <taxon>Clostridia</taxon>
        <taxon>Eubacteriales</taxon>
        <taxon>Clostridiaceae</taxon>
        <taxon>Clostridium</taxon>
    </lineage>
</organism>
<keyword id="KW-1185">Reference proteome</keyword>
<keyword id="KW-0687">Ribonucleoprotein</keyword>
<keyword id="KW-0689">Ribosomal protein</keyword>
<keyword id="KW-0694">RNA-binding</keyword>
<keyword id="KW-0699">rRNA-binding</keyword>
<proteinExistence type="inferred from homology"/>
<accession>Q97EJ3</accession>
<feature type="chain" id="PRO_0000260849" description="Large ribosomal subunit protein uL6">
    <location>
        <begin position="1"/>
        <end position="179"/>
    </location>
</feature>
<dbReference type="EMBL" id="AE001437">
    <property type="protein sequence ID" value="AAK81057.1"/>
    <property type="molecule type" value="Genomic_DNA"/>
</dbReference>
<dbReference type="PIR" id="F97283">
    <property type="entry name" value="F97283"/>
</dbReference>
<dbReference type="RefSeq" id="NP_349717.1">
    <property type="nucleotide sequence ID" value="NC_003030.1"/>
</dbReference>
<dbReference type="RefSeq" id="WP_010966397.1">
    <property type="nucleotide sequence ID" value="NC_003030.1"/>
</dbReference>
<dbReference type="SMR" id="Q97EJ3"/>
<dbReference type="STRING" id="272562.CA_C3118"/>
<dbReference type="GeneID" id="44999605"/>
<dbReference type="KEGG" id="cac:CA_C3118"/>
<dbReference type="PATRIC" id="fig|272562.8.peg.3301"/>
<dbReference type="eggNOG" id="COG0097">
    <property type="taxonomic scope" value="Bacteria"/>
</dbReference>
<dbReference type="HOGENOM" id="CLU_065464_1_2_9"/>
<dbReference type="OrthoDB" id="9805007at2"/>
<dbReference type="Proteomes" id="UP000000814">
    <property type="component" value="Chromosome"/>
</dbReference>
<dbReference type="GO" id="GO:0022625">
    <property type="term" value="C:cytosolic large ribosomal subunit"/>
    <property type="evidence" value="ECO:0007669"/>
    <property type="project" value="TreeGrafter"/>
</dbReference>
<dbReference type="GO" id="GO:0019843">
    <property type="term" value="F:rRNA binding"/>
    <property type="evidence" value="ECO:0007669"/>
    <property type="project" value="UniProtKB-UniRule"/>
</dbReference>
<dbReference type="GO" id="GO:0003735">
    <property type="term" value="F:structural constituent of ribosome"/>
    <property type="evidence" value="ECO:0007669"/>
    <property type="project" value="InterPro"/>
</dbReference>
<dbReference type="GO" id="GO:0002181">
    <property type="term" value="P:cytoplasmic translation"/>
    <property type="evidence" value="ECO:0007669"/>
    <property type="project" value="TreeGrafter"/>
</dbReference>
<dbReference type="FunFam" id="3.90.930.12:FF:000001">
    <property type="entry name" value="50S ribosomal protein L6"/>
    <property type="match status" value="1"/>
</dbReference>
<dbReference type="FunFam" id="3.90.930.12:FF:000002">
    <property type="entry name" value="50S ribosomal protein L6"/>
    <property type="match status" value="1"/>
</dbReference>
<dbReference type="Gene3D" id="3.90.930.12">
    <property type="entry name" value="Ribosomal protein L6, alpha-beta domain"/>
    <property type="match status" value="2"/>
</dbReference>
<dbReference type="HAMAP" id="MF_01365_B">
    <property type="entry name" value="Ribosomal_uL6_B"/>
    <property type="match status" value="1"/>
</dbReference>
<dbReference type="InterPro" id="IPR000702">
    <property type="entry name" value="Ribosomal_uL6-like"/>
</dbReference>
<dbReference type="InterPro" id="IPR036789">
    <property type="entry name" value="Ribosomal_uL6-like_a/b-dom_sf"/>
</dbReference>
<dbReference type="InterPro" id="IPR020040">
    <property type="entry name" value="Ribosomal_uL6_a/b-dom"/>
</dbReference>
<dbReference type="InterPro" id="IPR019906">
    <property type="entry name" value="Ribosomal_uL6_bac-type"/>
</dbReference>
<dbReference type="InterPro" id="IPR002358">
    <property type="entry name" value="Ribosomal_uL6_CS"/>
</dbReference>
<dbReference type="NCBIfam" id="TIGR03654">
    <property type="entry name" value="L6_bact"/>
    <property type="match status" value="1"/>
</dbReference>
<dbReference type="PANTHER" id="PTHR11655">
    <property type="entry name" value="60S/50S RIBOSOMAL PROTEIN L6/L9"/>
    <property type="match status" value="1"/>
</dbReference>
<dbReference type="PANTHER" id="PTHR11655:SF14">
    <property type="entry name" value="LARGE RIBOSOMAL SUBUNIT PROTEIN UL6M"/>
    <property type="match status" value="1"/>
</dbReference>
<dbReference type="Pfam" id="PF00347">
    <property type="entry name" value="Ribosomal_L6"/>
    <property type="match status" value="2"/>
</dbReference>
<dbReference type="PIRSF" id="PIRSF002162">
    <property type="entry name" value="Ribosomal_L6"/>
    <property type="match status" value="1"/>
</dbReference>
<dbReference type="PRINTS" id="PR00059">
    <property type="entry name" value="RIBOSOMALL6"/>
</dbReference>
<dbReference type="SUPFAM" id="SSF56053">
    <property type="entry name" value="Ribosomal protein L6"/>
    <property type="match status" value="2"/>
</dbReference>
<dbReference type="PROSITE" id="PS00525">
    <property type="entry name" value="RIBOSOMAL_L6_1"/>
    <property type="match status" value="1"/>
</dbReference>
<evidence type="ECO:0000255" key="1">
    <source>
        <dbReference type="HAMAP-Rule" id="MF_01365"/>
    </source>
</evidence>
<evidence type="ECO:0000305" key="2"/>